<name>Y2199_CROS5</name>
<proteinExistence type="inferred from homology"/>
<feature type="chain" id="PRO_1000166684" description="UPF0367 protein cce_2199">
    <location>
        <begin position="1"/>
        <end position="91"/>
    </location>
</feature>
<protein>
    <recommendedName>
        <fullName evidence="1">UPF0367 protein cce_2199</fullName>
    </recommendedName>
</protein>
<sequence>MISIDLALKYTPLPISVQRKEVEDAQTLYNQIVNAMKSGTSQLIELTCEKQTEKKVAVMSDQISAVILSQKDGGAAAGRVPGFFSMVESEQ</sequence>
<evidence type="ECO:0000255" key="1">
    <source>
        <dbReference type="HAMAP-Rule" id="MF_01360"/>
    </source>
</evidence>
<gene>
    <name type="ordered locus">cce_2199</name>
</gene>
<dbReference type="EMBL" id="CP000806">
    <property type="protein sequence ID" value="ACB51549.1"/>
    <property type="molecule type" value="Genomic_DNA"/>
</dbReference>
<dbReference type="RefSeq" id="WP_009546948.1">
    <property type="nucleotide sequence ID" value="NC_010546.1"/>
</dbReference>
<dbReference type="STRING" id="43989.cce_2199"/>
<dbReference type="KEGG" id="cyt:cce_2199"/>
<dbReference type="eggNOG" id="ENOG5032YB3">
    <property type="taxonomic scope" value="Bacteria"/>
</dbReference>
<dbReference type="HOGENOM" id="CLU_180777_0_0_3"/>
<dbReference type="OrthoDB" id="516864at2"/>
<dbReference type="Proteomes" id="UP000001203">
    <property type="component" value="Chromosome circular"/>
</dbReference>
<dbReference type="HAMAP" id="MF_01360">
    <property type="entry name" value="UPF0367"/>
    <property type="match status" value="1"/>
</dbReference>
<dbReference type="InterPro" id="IPR020885">
    <property type="entry name" value="UPF0367"/>
</dbReference>
<dbReference type="NCBIfam" id="NF010236">
    <property type="entry name" value="PRK13683.1"/>
    <property type="match status" value="1"/>
</dbReference>
<keyword id="KW-1185">Reference proteome</keyword>
<comment type="similarity">
    <text evidence="1">Belongs to the UPF0367 family.</text>
</comment>
<accession>B1WPH9</accession>
<organism>
    <name type="scientific">Crocosphaera subtropica (strain ATCC 51142 / BH68)</name>
    <name type="common">Cyanothece sp. (strain ATCC 51142)</name>
    <dbReference type="NCBI Taxonomy" id="43989"/>
    <lineage>
        <taxon>Bacteria</taxon>
        <taxon>Bacillati</taxon>
        <taxon>Cyanobacteriota</taxon>
        <taxon>Cyanophyceae</taxon>
        <taxon>Oscillatoriophycideae</taxon>
        <taxon>Chroococcales</taxon>
        <taxon>Aphanothecaceae</taxon>
        <taxon>Crocosphaera</taxon>
        <taxon>Crocosphaera subtropica</taxon>
    </lineage>
</organism>
<reference key="1">
    <citation type="journal article" date="2008" name="Proc. Natl. Acad. Sci. U.S.A.">
        <title>The genome of Cyanothece 51142, a unicellular diazotrophic cyanobacterium important in the marine nitrogen cycle.</title>
        <authorList>
            <person name="Welsh E.A."/>
            <person name="Liberton M."/>
            <person name="Stoeckel J."/>
            <person name="Loh T."/>
            <person name="Elvitigala T."/>
            <person name="Wang C."/>
            <person name="Wollam A."/>
            <person name="Fulton R.S."/>
            <person name="Clifton S.W."/>
            <person name="Jacobs J.M."/>
            <person name="Aurora R."/>
            <person name="Ghosh B.K."/>
            <person name="Sherman L.A."/>
            <person name="Smith R.D."/>
            <person name="Wilson R.K."/>
            <person name="Pakrasi H.B."/>
        </authorList>
    </citation>
    <scope>NUCLEOTIDE SEQUENCE [LARGE SCALE GENOMIC DNA]</scope>
    <source>
        <strain>ATCC 51142 / BH68</strain>
    </source>
</reference>